<feature type="chain" id="PRO_0000169311" description="Inner membrane protein YgbE">
    <location>
        <begin position="1"/>
        <end position="107"/>
    </location>
</feature>
<feature type="topological domain" description="Cytoplasmic" evidence="1">
    <location>
        <begin position="1"/>
        <end position="20"/>
    </location>
</feature>
<feature type="transmembrane region" description="Helical" evidence="1">
    <location>
        <begin position="21"/>
        <end position="43"/>
    </location>
</feature>
<feature type="topological domain" description="Periplasmic" evidence="1">
    <location>
        <begin position="44"/>
        <end position="52"/>
    </location>
</feature>
<feature type="transmembrane region" description="Helical" evidence="1">
    <location>
        <begin position="53"/>
        <end position="75"/>
    </location>
</feature>
<feature type="topological domain" description="Cytoplasmic" evidence="1">
    <location>
        <begin position="76"/>
        <end position="86"/>
    </location>
</feature>
<feature type="transmembrane region" description="Helical" evidence="1">
    <location>
        <begin position="87"/>
        <end position="106"/>
    </location>
</feature>
<feature type="topological domain" description="Periplasmic" evidence="1">
    <location>
        <position position="107"/>
    </location>
</feature>
<feature type="sequence conflict" description="In Ref. 1." evidence="2" ref="1">
    <original>VAVVVGIALHSLMDG</original>
    <variation>SRSGGDCAAFIDGRK</variation>
    <location>
        <begin position="67"/>
        <end position="81"/>
    </location>
</feature>
<accession>P46141</accession>
<accession>Q2MA80</accession>
<accession>Q46895</accession>
<name>YGBE_ECOLI</name>
<proteinExistence type="evidence at protein level"/>
<gene>
    <name type="primary">ygbE</name>
    <name type="ordered locus">b2749</name>
    <name type="ordered locus">JW2719</name>
</gene>
<dbReference type="EMBL" id="U29579">
    <property type="protein sequence ID" value="AAA69259.1"/>
    <property type="molecule type" value="Genomic_DNA"/>
</dbReference>
<dbReference type="EMBL" id="U00096">
    <property type="protein sequence ID" value="AAC75791.1"/>
    <property type="molecule type" value="Genomic_DNA"/>
</dbReference>
<dbReference type="EMBL" id="AP009048">
    <property type="protein sequence ID" value="BAE76826.1"/>
    <property type="molecule type" value="Genomic_DNA"/>
</dbReference>
<dbReference type="EMBL" id="M74586">
    <property type="status" value="NOT_ANNOTATED_CDS"/>
    <property type="molecule type" value="Genomic_DNA"/>
</dbReference>
<dbReference type="PIR" id="A65056">
    <property type="entry name" value="A65056"/>
</dbReference>
<dbReference type="RefSeq" id="NP_417229.1">
    <property type="nucleotide sequence ID" value="NC_000913.3"/>
</dbReference>
<dbReference type="RefSeq" id="WP_001246104.1">
    <property type="nucleotide sequence ID" value="NZ_STEB01000027.1"/>
</dbReference>
<dbReference type="BioGRID" id="4262282">
    <property type="interactions" value="13"/>
</dbReference>
<dbReference type="FunCoup" id="P46141">
    <property type="interactions" value="54"/>
</dbReference>
<dbReference type="STRING" id="511145.b2749"/>
<dbReference type="PaxDb" id="511145-b2749"/>
<dbReference type="EnsemblBacteria" id="AAC75791">
    <property type="protein sequence ID" value="AAC75791"/>
    <property type="gene ID" value="b2749"/>
</dbReference>
<dbReference type="GeneID" id="947268"/>
<dbReference type="KEGG" id="ecj:JW2719"/>
<dbReference type="KEGG" id="eco:b2749"/>
<dbReference type="KEGG" id="ecoc:C3026_15115"/>
<dbReference type="PATRIC" id="fig|1411691.4.peg.3991"/>
<dbReference type="EchoBASE" id="EB2569"/>
<dbReference type="eggNOG" id="ENOG5032TB7">
    <property type="taxonomic scope" value="Bacteria"/>
</dbReference>
<dbReference type="HOGENOM" id="CLU_172652_0_0_6"/>
<dbReference type="InParanoid" id="P46141"/>
<dbReference type="OMA" id="QKETSWF"/>
<dbReference type="OrthoDB" id="6414990at2"/>
<dbReference type="PhylomeDB" id="P46141"/>
<dbReference type="BioCyc" id="EcoCyc:EG12707-MONOMER"/>
<dbReference type="PRO" id="PR:P46141"/>
<dbReference type="Proteomes" id="UP000000625">
    <property type="component" value="Chromosome"/>
</dbReference>
<dbReference type="GO" id="GO:0005886">
    <property type="term" value="C:plasma membrane"/>
    <property type="evidence" value="ECO:0000314"/>
    <property type="project" value="EcoCyc"/>
</dbReference>
<dbReference type="InterPro" id="IPR022721">
    <property type="entry name" value="DUF3561"/>
</dbReference>
<dbReference type="NCBIfam" id="NF008001">
    <property type="entry name" value="PRK10726.1"/>
    <property type="match status" value="1"/>
</dbReference>
<dbReference type="Pfam" id="PF12084">
    <property type="entry name" value="DUF3561"/>
    <property type="match status" value="1"/>
</dbReference>
<comment type="subcellular location">
    <subcellularLocation>
        <location>Cell inner membrane</location>
        <topology>Multi-pass membrane protein</topology>
    </subcellularLocation>
</comment>
<keyword id="KW-0997">Cell inner membrane</keyword>
<keyword id="KW-1003">Cell membrane</keyword>
<keyword id="KW-0472">Membrane</keyword>
<keyword id="KW-1185">Reference proteome</keyword>
<keyword id="KW-0812">Transmembrane</keyword>
<keyword id="KW-1133">Transmembrane helix</keyword>
<protein>
    <recommendedName>
        <fullName>Inner membrane protein YgbE</fullName>
    </recommendedName>
</protein>
<evidence type="ECO:0000255" key="1"/>
<evidence type="ECO:0000305" key="2"/>
<reference key="1">
    <citation type="journal article" date="1997" name="Science">
        <title>The complete genome sequence of Escherichia coli K-12.</title>
        <authorList>
            <person name="Blattner F.R."/>
            <person name="Plunkett G. III"/>
            <person name="Bloch C.A."/>
            <person name="Perna N.T."/>
            <person name="Burland V."/>
            <person name="Riley M."/>
            <person name="Collado-Vides J."/>
            <person name="Glasner J.D."/>
            <person name="Rode C.K."/>
            <person name="Mayhew G.F."/>
            <person name="Gregor J."/>
            <person name="Davis N.W."/>
            <person name="Kirkpatrick H.A."/>
            <person name="Goeden M.A."/>
            <person name="Rose D.J."/>
            <person name="Mau B."/>
            <person name="Shao Y."/>
        </authorList>
    </citation>
    <scope>NUCLEOTIDE SEQUENCE [LARGE SCALE GENOMIC DNA]</scope>
    <source>
        <strain>K12 / MG1655 / ATCC 47076</strain>
    </source>
</reference>
<reference key="2">
    <citation type="journal article" date="2006" name="Mol. Syst. Biol.">
        <title>Highly accurate genome sequences of Escherichia coli K-12 strains MG1655 and W3110.</title>
        <authorList>
            <person name="Hayashi K."/>
            <person name="Morooka N."/>
            <person name="Yamamoto Y."/>
            <person name="Fujita K."/>
            <person name="Isono K."/>
            <person name="Choi S."/>
            <person name="Ohtsubo E."/>
            <person name="Baba T."/>
            <person name="Wanner B.L."/>
            <person name="Mori H."/>
            <person name="Horiuchi T."/>
        </authorList>
    </citation>
    <scope>NUCLEOTIDE SEQUENCE [LARGE SCALE GENOMIC DNA]</scope>
    <source>
        <strain>K12 / W3110 / ATCC 27325 / DSM 5911</strain>
    </source>
</reference>
<reference key="3">
    <citation type="journal article" date="1992" name="J. Biol. Chem.">
        <title>The DNA sequence of the sulfate activation locus from Escherichia coli K-12.</title>
        <authorList>
            <person name="Leyh T.S."/>
            <person name="Vogt T.F."/>
            <person name="Suo Y."/>
        </authorList>
    </citation>
    <scope>NUCLEOTIDE SEQUENCE [GENOMIC DNA] OF 1-81</scope>
    <source>
        <strain>K12</strain>
    </source>
</reference>
<reference key="4">
    <citation type="journal article" date="1995" name="Nucleic Acids Res.">
        <title>Detection of new genes in a bacterial genome using Markov models for three gene classes.</title>
        <authorList>
            <person name="Borodovsky M."/>
            <person name="McIninch J."/>
            <person name="Koonin E.V."/>
            <person name="Rudd K.E."/>
            <person name="Medigue C."/>
            <person name="Danchin A."/>
        </authorList>
    </citation>
    <scope>IDENTIFICATION</scope>
</reference>
<reference key="5">
    <citation type="journal article" date="2005" name="Science">
        <title>Global topology analysis of the Escherichia coli inner membrane proteome.</title>
        <authorList>
            <person name="Daley D.O."/>
            <person name="Rapp M."/>
            <person name="Granseth E."/>
            <person name="Melen K."/>
            <person name="Drew D."/>
            <person name="von Heijne G."/>
        </authorList>
    </citation>
    <scope>TOPOLOGY [LARGE SCALE ANALYSIS]</scope>
    <source>
        <strain>K12 / MG1655 / ATCC 47076</strain>
    </source>
</reference>
<sequence>MRNSHNITLTNNDSLTEDEETTWSLPGAVVGFISWLFALAMPMLIYGSNTLFFFIYTWPFFLALMPVAVVVGIALHSLMDGKLRYSIVFTLVTVGIMFGALFMWLLG</sequence>
<organism>
    <name type="scientific">Escherichia coli (strain K12)</name>
    <dbReference type="NCBI Taxonomy" id="83333"/>
    <lineage>
        <taxon>Bacteria</taxon>
        <taxon>Pseudomonadati</taxon>
        <taxon>Pseudomonadota</taxon>
        <taxon>Gammaproteobacteria</taxon>
        <taxon>Enterobacterales</taxon>
        <taxon>Enterobacteriaceae</taxon>
        <taxon>Escherichia</taxon>
    </lineage>
</organism>